<organism>
    <name type="scientific">Chromohalobacter salexigens (strain ATCC BAA-138 / DSM 3043 / CIP 106854 / NCIMB 13768 / 1H11)</name>
    <dbReference type="NCBI Taxonomy" id="290398"/>
    <lineage>
        <taxon>Bacteria</taxon>
        <taxon>Pseudomonadati</taxon>
        <taxon>Pseudomonadota</taxon>
        <taxon>Gammaproteobacteria</taxon>
        <taxon>Oceanospirillales</taxon>
        <taxon>Halomonadaceae</taxon>
        <taxon>Chromohalobacter</taxon>
    </lineage>
</organism>
<comment type="function">
    <text evidence="1">Plays a critical role in the incorporation of lipoproteins in the outer membrane after they are released by the LolA protein.</text>
</comment>
<comment type="subunit">
    <text evidence="1">Monomer.</text>
</comment>
<comment type="subcellular location">
    <subcellularLocation>
        <location evidence="1">Cell outer membrane</location>
        <topology evidence="1">Lipid-anchor</topology>
    </subcellularLocation>
</comment>
<comment type="similarity">
    <text evidence="1">Belongs to the LolB family.</text>
</comment>
<dbReference type="EMBL" id="CP000285">
    <property type="protein sequence ID" value="ABE58879.1"/>
    <property type="molecule type" value="Genomic_DNA"/>
</dbReference>
<dbReference type="RefSeq" id="WP_011506825.1">
    <property type="nucleotide sequence ID" value="NC_007963.1"/>
</dbReference>
<dbReference type="SMR" id="Q1QXC9"/>
<dbReference type="STRING" id="290398.Csal_1526"/>
<dbReference type="GeneID" id="95334257"/>
<dbReference type="KEGG" id="csa:Csal_1526"/>
<dbReference type="eggNOG" id="COG3017">
    <property type="taxonomic scope" value="Bacteria"/>
</dbReference>
<dbReference type="HOGENOM" id="CLU_092816_2_1_6"/>
<dbReference type="OrthoDB" id="9797618at2"/>
<dbReference type="Proteomes" id="UP000000239">
    <property type="component" value="Chromosome"/>
</dbReference>
<dbReference type="GO" id="GO:0009279">
    <property type="term" value="C:cell outer membrane"/>
    <property type="evidence" value="ECO:0007669"/>
    <property type="project" value="UniProtKB-SubCell"/>
</dbReference>
<dbReference type="GO" id="GO:0044874">
    <property type="term" value="P:lipoprotein localization to outer membrane"/>
    <property type="evidence" value="ECO:0007669"/>
    <property type="project" value="UniProtKB-UniRule"/>
</dbReference>
<dbReference type="GO" id="GO:0015031">
    <property type="term" value="P:protein transport"/>
    <property type="evidence" value="ECO:0007669"/>
    <property type="project" value="UniProtKB-KW"/>
</dbReference>
<dbReference type="CDD" id="cd16326">
    <property type="entry name" value="LolB"/>
    <property type="match status" value="1"/>
</dbReference>
<dbReference type="Gene3D" id="2.50.20.10">
    <property type="entry name" value="Lipoprotein localisation LolA/LolB/LppX"/>
    <property type="match status" value="1"/>
</dbReference>
<dbReference type="HAMAP" id="MF_00233">
    <property type="entry name" value="LolB"/>
    <property type="match status" value="1"/>
</dbReference>
<dbReference type="InterPro" id="IPR029046">
    <property type="entry name" value="LolA/LolB/LppX"/>
</dbReference>
<dbReference type="InterPro" id="IPR004565">
    <property type="entry name" value="OM_lipoprot_LolB"/>
</dbReference>
<dbReference type="NCBIfam" id="TIGR00548">
    <property type="entry name" value="lolB"/>
    <property type="match status" value="1"/>
</dbReference>
<dbReference type="Pfam" id="PF03550">
    <property type="entry name" value="LolB"/>
    <property type="match status" value="1"/>
</dbReference>
<dbReference type="SUPFAM" id="SSF89392">
    <property type="entry name" value="Prokaryotic lipoproteins and lipoprotein localization factors"/>
    <property type="match status" value="1"/>
</dbReference>
<dbReference type="PROSITE" id="PS51257">
    <property type="entry name" value="PROKAR_LIPOPROTEIN"/>
    <property type="match status" value="1"/>
</dbReference>
<gene>
    <name evidence="1" type="primary">lolB</name>
    <name type="ordered locus">Csal_1526</name>
</gene>
<keyword id="KW-0998">Cell outer membrane</keyword>
<keyword id="KW-0143">Chaperone</keyword>
<keyword id="KW-0449">Lipoprotein</keyword>
<keyword id="KW-0472">Membrane</keyword>
<keyword id="KW-0564">Palmitate</keyword>
<keyword id="KW-0653">Protein transport</keyword>
<keyword id="KW-1185">Reference proteome</keyword>
<keyword id="KW-0732">Signal</keyword>
<keyword id="KW-0813">Transport</keyword>
<protein>
    <recommendedName>
        <fullName evidence="1">Outer-membrane lipoprotein LolB</fullName>
    </recommendedName>
</protein>
<name>LOLB_CHRSD</name>
<evidence type="ECO:0000255" key="1">
    <source>
        <dbReference type="HAMAP-Rule" id="MF_00233"/>
    </source>
</evidence>
<feature type="signal peptide" evidence="1">
    <location>
        <begin position="1"/>
        <end position="30"/>
    </location>
</feature>
<feature type="chain" id="PRO_0000336599" description="Outer-membrane lipoprotein LolB">
    <location>
        <begin position="31"/>
        <end position="214"/>
    </location>
</feature>
<feature type="lipid moiety-binding region" description="N-palmitoyl cysteine" evidence="1">
    <location>
        <position position="31"/>
    </location>
</feature>
<feature type="lipid moiety-binding region" description="S-diacylglycerol cysteine" evidence="1">
    <location>
        <position position="31"/>
    </location>
</feature>
<accession>Q1QXC9</accession>
<reference key="1">
    <citation type="journal article" date="2011" name="Stand. Genomic Sci.">
        <title>Complete genome sequence of the halophilic and highly halotolerant Chromohalobacter salexigens type strain (1H11(T)).</title>
        <authorList>
            <person name="Copeland A."/>
            <person name="O'Connor K."/>
            <person name="Lucas S."/>
            <person name="Lapidus A."/>
            <person name="Berry K.W."/>
            <person name="Detter J.C."/>
            <person name="Del Rio T.G."/>
            <person name="Hammon N."/>
            <person name="Dalin E."/>
            <person name="Tice H."/>
            <person name="Pitluck S."/>
            <person name="Bruce D."/>
            <person name="Goodwin L."/>
            <person name="Han C."/>
            <person name="Tapia R."/>
            <person name="Saunders E."/>
            <person name="Schmutz J."/>
            <person name="Brettin T."/>
            <person name="Larimer F."/>
            <person name="Land M."/>
            <person name="Hauser L."/>
            <person name="Vargas C."/>
            <person name="Nieto J.J."/>
            <person name="Kyrpides N.C."/>
            <person name="Ivanova N."/>
            <person name="Goker M."/>
            <person name="Klenk H.P."/>
            <person name="Csonka L.N."/>
            <person name="Woyke T."/>
        </authorList>
    </citation>
    <scope>NUCLEOTIDE SEQUENCE [LARGE SCALE GENOMIC DNA]</scope>
    <source>
        <strain>ATCC BAA-138 / DSM 3043 / CIP 106854 / NCIMB 13768 / 1H11</strain>
    </source>
</reference>
<proteinExistence type="inferred from homology"/>
<sequence length="214" mass="23855">MKHVSSPHPCAAIASARVWLGLVLVALLAGCASQAPSPDQSRDRGDWEAQIERLQTLDAWSLAGKVGLRTNEGSESANIDWQQRPDTYRILISGPFGAGRTLLTGRPGAVTLTNGEGRFEAETPEALMEQQLGWSLPISALDYWVRGLPAPEGGERIEHDEQGFPQQLRQFGWTIEYRDWTRADTLWMPRRLVMTYGELRATLVANQWQLLSDT</sequence>